<gene>
    <name evidence="1" type="primary">frr</name>
    <name type="ordered locus">UPA3_0543</name>
</gene>
<name>RRF_UREP2</name>
<accession>B1AJF3</accession>
<reference key="1">
    <citation type="submission" date="2008-02" db="EMBL/GenBank/DDBJ databases">
        <title>Genome sequence of Ureaplasma parvum serovar 3.</title>
        <authorList>
            <person name="Methe B.A."/>
            <person name="Glass J."/>
            <person name="Waites K."/>
            <person name="Shrivastava S."/>
        </authorList>
    </citation>
    <scope>NUCLEOTIDE SEQUENCE [LARGE SCALE GENOMIC DNA]</scope>
    <source>
        <strain>ATCC 27815 / 27 / NCTC 11736</strain>
    </source>
</reference>
<comment type="function">
    <text evidence="1">Responsible for the release of ribosomes from messenger RNA at the termination of protein biosynthesis. May increase the efficiency of translation by recycling ribosomes from one round of translation to another.</text>
</comment>
<comment type="subcellular location">
    <subcellularLocation>
        <location evidence="1">Cytoplasm</location>
    </subcellularLocation>
</comment>
<comment type="similarity">
    <text evidence="1">Belongs to the RRF family.</text>
</comment>
<proteinExistence type="inferred from homology"/>
<dbReference type="EMBL" id="CP000942">
    <property type="protein sequence ID" value="ACA33126.1"/>
    <property type="molecule type" value="Genomic_DNA"/>
</dbReference>
<dbReference type="RefSeq" id="WP_006688460.1">
    <property type="nucleotide sequence ID" value="NC_010503.1"/>
</dbReference>
<dbReference type="SMR" id="B1AJF3"/>
<dbReference type="GeneID" id="29672213"/>
<dbReference type="KEGG" id="upa:UPA3_0543"/>
<dbReference type="HOGENOM" id="CLU_073981_2_0_14"/>
<dbReference type="Proteomes" id="UP000002162">
    <property type="component" value="Chromosome"/>
</dbReference>
<dbReference type="GO" id="GO:0005737">
    <property type="term" value="C:cytoplasm"/>
    <property type="evidence" value="ECO:0007669"/>
    <property type="project" value="UniProtKB-SubCell"/>
</dbReference>
<dbReference type="GO" id="GO:0043023">
    <property type="term" value="F:ribosomal large subunit binding"/>
    <property type="evidence" value="ECO:0007669"/>
    <property type="project" value="TreeGrafter"/>
</dbReference>
<dbReference type="GO" id="GO:0006415">
    <property type="term" value="P:translational termination"/>
    <property type="evidence" value="ECO:0007669"/>
    <property type="project" value="UniProtKB-UniRule"/>
</dbReference>
<dbReference type="CDD" id="cd00520">
    <property type="entry name" value="RRF"/>
    <property type="match status" value="1"/>
</dbReference>
<dbReference type="FunFam" id="3.30.1360.40:FF:000001">
    <property type="entry name" value="Ribosome-recycling factor"/>
    <property type="match status" value="1"/>
</dbReference>
<dbReference type="Gene3D" id="3.30.1360.40">
    <property type="match status" value="1"/>
</dbReference>
<dbReference type="Gene3D" id="1.10.132.20">
    <property type="entry name" value="Ribosome-recycling factor"/>
    <property type="match status" value="1"/>
</dbReference>
<dbReference type="HAMAP" id="MF_00040">
    <property type="entry name" value="RRF"/>
    <property type="match status" value="1"/>
</dbReference>
<dbReference type="InterPro" id="IPR002661">
    <property type="entry name" value="Ribosome_recyc_fac"/>
</dbReference>
<dbReference type="InterPro" id="IPR023584">
    <property type="entry name" value="Ribosome_recyc_fac_dom"/>
</dbReference>
<dbReference type="InterPro" id="IPR036191">
    <property type="entry name" value="RRF_sf"/>
</dbReference>
<dbReference type="NCBIfam" id="TIGR00496">
    <property type="entry name" value="frr"/>
    <property type="match status" value="1"/>
</dbReference>
<dbReference type="PANTHER" id="PTHR20982:SF3">
    <property type="entry name" value="MITOCHONDRIAL RIBOSOME RECYCLING FACTOR PSEUDO 1"/>
    <property type="match status" value="1"/>
</dbReference>
<dbReference type="PANTHER" id="PTHR20982">
    <property type="entry name" value="RIBOSOME RECYCLING FACTOR"/>
    <property type="match status" value="1"/>
</dbReference>
<dbReference type="Pfam" id="PF01765">
    <property type="entry name" value="RRF"/>
    <property type="match status" value="1"/>
</dbReference>
<dbReference type="SUPFAM" id="SSF55194">
    <property type="entry name" value="Ribosome recycling factor, RRF"/>
    <property type="match status" value="1"/>
</dbReference>
<feature type="chain" id="PRO_1000074608" description="Ribosome-recycling factor">
    <location>
        <begin position="1"/>
        <end position="183"/>
    </location>
</feature>
<keyword id="KW-0963">Cytoplasm</keyword>
<keyword id="KW-0648">Protein biosynthesis</keyword>
<evidence type="ECO:0000255" key="1">
    <source>
        <dbReference type="HAMAP-Rule" id="MF_00040"/>
    </source>
</evidence>
<protein>
    <recommendedName>
        <fullName evidence="1">Ribosome-recycling factor</fullName>
        <shortName evidence="1">RRF</shortName>
    </recommendedName>
    <alternativeName>
        <fullName evidence="1">Ribosome-releasing factor</fullName>
    </alternativeName>
</protein>
<organism>
    <name type="scientific">Ureaplasma parvum serovar 3 (strain ATCC 27815 / 27 / NCTC 11736)</name>
    <dbReference type="NCBI Taxonomy" id="505682"/>
    <lineage>
        <taxon>Bacteria</taxon>
        <taxon>Bacillati</taxon>
        <taxon>Mycoplasmatota</taxon>
        <taxon>Mycoplasmoidales</taxon>
        <taxon>Mycoplasmoidaceae</taxon>
        <taxon>Ureaplasma</taxon>
    </lineage>
</organism>
<sequence>MNFKIYETKIREEFELVLKWMHNEFIKLRTGRATPAILDGILVNYYGSMMPINQLANISVPEPRVLAIKPYDRSSIKDIATAINASNLGVNPQVDVDIIRLTFAAPTEEVRKNLVKKAKQVGEEAKIRVRHIRQEAQDLFKKDSTTIEDDKKFFQTELDNLTKELNKEIETVVSHKEKDIMTV</sequence>